<reference key="1">
    <citation type="submission" date="2006-08" db="EMBL/GenBank/DDBJ databases">
        <title>Complete sequence of Maricaulis maris MCS10.</title>
        <authorList>
            <consortium name="US DOE Joint Genome Institute"/>
            <person name="Copeland A."/>
            <person name="Lucas S."/>
            <person name="Lapidus A."/>
            <person name="Barry K."/>
            <person name="Detter J.C."/>
            <person name="Glavina del Rio T."/>
            <person name="Hammon N."/>
            <person name="Israni S."/>
            <person name="Dalin E."/>
            <person name="Tice H."/>
            <person name="Pitluck S."/>
            <person name="Saunders E."/>
            <person name="Brettin T."/>
            <person name="Bruce D."/>
            <person name="Han C."/>
            <person name="Tapia R."/>
            <person name="Gilna P."/>
            <person name="Schmutz J."/>
            <person name="Larimer F."/>
            <person name="Land M."/>
            <person name="Hauser L."/>
            <person name="Kyrpides N."/>
            <person name="Mikhailova N."/>
            <person name="Viollier P."/>
            <person name="Stephens C."/>
            <person name="Richardson P."/>
        </authorList>
    </citation>
    <scope>NUCLEOTIDE SEQUENCE [LARGE SCALE GENOMIC DNA]</scope>
    <source>
        <strain>MCS10</strain>
    </source>
</reference>
<sequence length="243" mass="26166">MTDTSTPDHANRTALVLFSGGQDSATCLAWALQRYARVETVGFDYGQRHHVEMTARERVRSGLAASFPHWGDRLGEDFVIDLAGYGAIADSALTADRAIEMQANGLPSTFVPGRNLVFLTVASALAYRRGHGVLVGGMCETDFSGYPDCRRNTIDAMQTALGLGLEMAVEIATPLMHLDKAATWALAHQLGGDALIGLIEEDSHTCYRGERGKRHAWGYGCGDCPACELRANGHAAWQNSVPA</sequence>
<gene>
    <name evidence="1" type="primary">queC</name>
    <name type="ordered locus">Mmar10_0717</name>
</gene>
<feature type="chain" id="PRO_0000336921" description="7-cyano-7-deazaguanine synthase">
    <location>
        <begin position="1"/>
        <end position="243"/>
    </location>
</feature>
<feature type="binding site" evidence="1">
    <location>
        <begin position="18"/>
        <end position="28"/>
    </location>
    <ligand>
        <name>ATP</name>
        <dbReference type="ChEBI" id="CHEBI:30616"/>
    </ligand>
</feature>
<feature type="binding site" evidence="1">
    <location>
        <position position="206"/>
    </location>
    <ligand>
        <name>Zn(2+)</name>
        <dbReference type="ChEBI" id="CHEBI:29105"/>
    </ligand>
</feature>
<feature type="binding site" evidence="1">
    <location>
        <position position="221"/>
    </location>
    <ligand>
        <name>Zn(2+)</name>
        <dbReference type="ChEBI" id="CHEBI:29105"/>
    </ligand>
</feature>
<feature type="binding site" evidence="1">
    <location>
        <position position="224"/>
    </location>
    <ligand>
        <name>Zn(2+)</name>
        <dbReference type="ChEBI" id="CHEBI:29105"/>
    </ligand>
</feature>
<feature type="binding site" evidence="1">
    <location>
        <position position="227"/>
    </location>
    <ligand>
        <name>Zn(2+)</name>
        <dbReference type="ChEBI" id="CHEBI:29105"/>
    </ligand>
</feature>
<organism>
    <name type="scientific">Maricaulis maris (strain MCS10)</name>
    <name type="common">Caulobacter maris</name>
    <dbReference type="NCBI Taxonomy" id="394221"/>
    <lineage>
        <taxon>Bacteria</taxon>
        <taxon>Pseudomonadati</taxon>
        <taxon>Pseudomonadota</taxon>
        <taxon>Alphaproteobacteria</taxon>
        <taxon>Maricaulales</taxon>
        <taxon>Maricaulaceae</taxon>
        <taxon>Maricaulis</taxon>
    </lineage>
</organism>
<accession>Q0ARS7</accession>
<proteinExistence type="inferred from homology"/>
<dbReference type="EC" id="6.3.4.20" evidence="1"/>
<dbReference type="EMBL" id="CP000449">
    <property type="protein sequence ID" value="ABI65010.1"/>
    <property type="molecule type" value="Genomic_DNA"/>
</dbReference>
<dbReference type="RefSeq" id="WP_011642657.1">
    <property type="nucleotide sequence ID" value="NC_008347.1"/>
</dbReference>
<dbReference type="SMR" id="Q0ARS7"/>
<dbReference type="STRING" id="394221.Mmar10_0717"/>
<dbReference type="KEGG" id="mmr:Mmar10_0717"/>
<dbReference type="eggNOG" id="COG0603">
    <property type="taxonomic scope" value="Bacteria"/>
</dbReference>
<dbReference type="HOGENOM" id="CLU_081854_0_0_5"/>
<dbReference type="OrthoDB" id="9789567at2"/>
<dbReference type="UniPathway" id="UPA00391"/>
<dbReference type="Proteomes" id="UP000001964">
    <property type="component" value="Chromosome"/>
</dbReference>
<dbReference type="GO" id="GO:0005524">
    <property type="term" value="F:ATP binding"/>
    <property type="evidence" value="ECO:0007669"/>
    <property type="project" value="UniProtKB-UniRule"/>
</dbReference>
<dbReference type="GO" id="GO:0016879">
    <property type="term" value="F:ligase activity, forming carbon-nitrogen bonds"/>
    <property type="evidence" value="ECO:0007669"/>
    <property type="project" value="UniProtKB-UniRule"/>
</dbReference>
<dbReference type="GO" id="GO:0008270">
    <property type="term" value="F:zinc ion binding"/>
    <property type="evidence" value="ECO:0007669"/>
    <property type="project" value="UniProtKB-UniRule"/>
</dbReference>
<dbReference type="GO" id="GO:0008616">
    <property type="term" value="P:queuosine biosynthetic process"/>
    <property type="evidence" value="ECO:0007669"/>
    <property type="project" value="UniProtKB-UniRule"/>
</dbReference>
<dbReference type="CDD" id="cd01995">
    <property type="entry name" value="QueC-like"/>
    <property type="match status" value="1"/>
</dbReference>
<dbReference type="Gene3D" id="3.40.50.620">
    <property type="entry name" value="HUPs"/>
    <property type="match status" value="1"/>
</dbReference>
<dbReference type="HAMAP" id="MF_01633">
    <property type="entry name" value="QueC"/>
    <property type="match status" value="1"/>
</dbReference>
<dbReference type="InterPro" id="IPR018317">
    <property type="entry name" value="QueC"/>
</dbReference>
<dbReference type="InterPro" id="IPR014729">
    <property type="entry name" value="Rossmann-like_a/b/a_fold"/>
</dbReference>
<dbReference type="NCBIfam" id="TIGR00364">
    <property type="entry name" value="7-cyano-7-deazaguanine synthase QueC"/>
    <property type="match status" value="1"/>
</dbReference>
<dbReference type="PANTHER" id="PTHR42914">
    <property type="entry name" value="7-CYANO-7-DEAZAGUANINE SYNTHASE"/>
    <property type="match status" value="1"/>
</dbReference>
<dbReference type="PANTHER" id="PTHR42914:SF1">
    <property type="entry name" value="7-CYANO-7-DEAZAGUANINE SYNTHASE"/>
    <property type="match status" value="1"/>
</dbReference>
<dbReference type="Pfam" id="PF06508">
    <property type="entry name" value="QueC"/>
    <property type="match status" value="1"/>
</dbReference>
<dbReference type="PIRSF" id="PIRSF006293">
    <property type="entry name" value="ExsB"/>
    <property type="match status" value="1"/>
</dbReference>
<dbReference type="SUPFAM" id="SSF52402">
    <property type="entry name" value="Adenine nucleotide alpha hydrolases-like"/>
    <property type="match status" value="1"/>
</dbReference>
<keyword id="KW-0067">ATP-binding</keyword>
<keyword id="KW-0436">Ligase</keyword>
<keyword id="KW-0479">Metal-binding</keyword>
<keyword id="KW-0547">Nucleotide-binding</keyword>
<keyword id="KW-0671">Queuosine biosynthesis</keyword>
<keyword id="KW-1185">Reference proteome</keyword>
<keyword id="KW-0862">Zinc</keyword>
<name>QUEC_MARMM</name>
<protein>
    <recommendedName>
        <fullName evidence="1">7-cyano-7-deazaguanine synthase</fullName>
        <ecNumber evidence="1">6.3.4.20</ecNumber>
    </recommendedName>
    <alternativeName>
        <fullName evidence="1">7-cyano-7-carbaguanine synthase</fullName>
    </alternativeName>
    <alternativeName>
        <fullName evidence="1">PreQ(0) synthase</fullName>
    </alternativeName>
    <alternativeName>
        <fullName evidence="1">Queuosine biosynthesis protein QueC</fullName>
    </alternativeName>
</protein>
<comment type="function">
    <text evidence="1">Catalyzes the ATP-dependent conversion of 7-carboxy-7-deazaguanine (CDG) to 7-cyano-7-deazaguanine (preQ(0)).</text>
</comment>
<comment type="catalytic activity">
    <reaction evidence="1">
        <text>7-carboxy-7-deazaguanine + NH4(+) + ATP = 7-cyano-7-deazaguanine + ADP + phosphate + H2O + H(+)</text>
        <dbReference type="Rhea" id="RHEA:27982"/>
        <dbReference type="ChEBI" id="CHEBI:15377"/>
        <dbReference type="ChEBI" id="CHEBI:15378"/>
        <dbReference type="ChEBI" id="CHEBI:28938"/>
        <dbReference type="ChEBI" id="CHEBI:30616"/>
        <dbReference type="ChEBI" id="CHEBI:43474"/>
        <dbReference type="ChEBI" id="CHEBI:45075"/>
        <dbReference type="ChEBI" id="CHEBI:61036"/>
        <dbReference type="ChEBI" id="CHEBI:456216"/>
        <dbReference type="EC" id="6.3.4.20"/>
    </reaction>
</comment>
<comment type="cofactor">
    <cofactor evidence="1">
        <name>Zn(2+)</name>
        <dbReference type="ChEBI" id="CHEBI:29105"/>
    </cofactor>
    <text evidence="1">Binds 1 zinc ion per subunit.</text>
</comment>
<comment type="pathway">
    <text evidence="1">Purine metabolism; 7-cyano-7-deazaguanine biosynthesis.</text>
</comment>
<comment type="similarity">
    <text evidence="1">Belongs to the QueC family.</text>
</comment>
<evidence type="ECO:0000255" key="1">
    <source>
        <dbReference type="HAMAP-Rule" id="MF_01633"/>
    </source>
</evidence>